<protein>
    <recommendedName>
        <fullName evidence="2">Photosystem II D2 protein</fullName>
        <shortName evidence="2">PSII D2 protein</shortName>
        <ecNumber evidence="2">1.10.3.9</ecNumber>
    </recommendedName>
    <alternativeName>
        <fullName evidence="2">Photosystem Q(A) protein</fullName>
    </alternativeName>
</protein>
<dbReference type="EC" id="1.10.3.9" evidence="2"/>
<dbReference type="EMBL" id="AF494278">
    <property type="protein sequence ID" value="AAM96541.1"/>
    <property type="molecule type" value="Genomic_DNA"/>
</dbReference>
<dbReference type="RefSeq" id="NP_683825.1">
    <property type="nucleotide sequence ID" value="NC_004115.1"/>
</dbReference>
<dbReference type="SMR" id="Q8M9W4"/>
<dbReference type="GeneID" id="860697"/>
<dbReference type="GO" id="GO:0009535">
    <property type="term" value="C:chloroplast thylakoid membrane"/>
    <property type="evidence" value="ECO:0007669"/>
    <property type="project" value="UniProtKB-SubCell"/>
</dbReference>
<dbReference type="GO" id="GO:0009523">
    <property type="term" value="C:photosystem II"/>
    <property type="evidence" value="ECO:0007669"/>
    <property type="project" value="UniProtKB-KW"/>
</dbReference>
<dbReference type="GO" id="GO:0016168">
    <property type="term" value="F:chlorophyll binding"/>
    <property type="evidence" value="ECO:0007669"/>
    <property type="project" value="UniProtKB-UniRule"/>
</dbReference>
<dbReference type="GO" id="GO:0045156">
    <property type="term" value="F:electron transporter, transferring electrons within the cyclic electron transport pathway of photosynthesis activity"/>
    <property type="evidence" value="ECO:0007669"/>
    <property type="project" value="InterPro"/>
</dbReference>
<dbReference type="GO" id="GO:0005506">
    <property type="term" value="F:iron ion binding"/>
    <property type="evidence" value="ECO:0007669"/>
    <property type="project" value="UniProtKB-UniRule"/>
</dbReference>
<dbReference type="GO" id="GO:0010242">
    <property type="term" value="F:oxygen evolving activity"/>
    <property type="evidence" value="ECO:0007669"/>
    <property type="project" value="UniProtKB-EC"/>
</dbReference>
<dbReference type="GO" id="GO:0009772">
    <property type="term" value="P:photosynthetic electron transport in photosystem II"/>
    <property type="evidence" value="ECO:0007669"/>
    <property type="project" value="InterPro"/>
</dbReference>
<dbReference type="CDD" id="cd09288">
    <property type="entry name" value="Photosystem-II_D2"/>
    <property type="match status" value="1"/>
</dbReference>
<dbReference type="FunFam" id="1.20.85.10:FF:000001">
    <property type="entry name" value="photosystem II D2 protein-like"/>
    <property type="match status" value="1"/>
</dbReference>
<dbReference type="Gene3D" id="1.20.85.10">
    <property type="entry name" value="Photosystem II protein D1-like"/>
    <property type="match status" value="1"/>
</dbReference>
<dbReference type="HAMAP" id="MF_01383">
    <property type="entry name" value="PSII_PsbD_D2"/>
    <property type="match status" value="1"/>
</dbReference>
<dbReference type="InterPro" id="IPR055266">
    <property type="entry name" value="D1/D2"/>
</dbReference>
<dbReference type="InterPro" id="IPR036854">
    <property type="entry name" value="Photo_II_D1/D2_sf"/>
</dbReference>
<dbReference type="InterPro" id="IPR000484">
    <property type="entry name" value="Photo_RC_L/M"/>
</dbReference>
<dbReference type="InterPro" id="IPR055265">
    <property type="entry name" value="Photo_RC_L/M_CS"/>
</dbReference>
<dbReference type="InterPro" id="IPR005868">
    <property type="entry name" value="PSII_PsbD/D2"/>
</dbReference>
<dbReference type="NCBIfam" id="TIGR01152">
    <property type="entry name" value="psbD"/>
    <property type="match status" value="1"/>
</dbReference>
<dbReference type="PANTHER" id="PTHR33149:SF12">
    <property type="entry name" value="PHOTOSYSTEM II D2 PROTEIN"/>
    <property type="match status" value="1"/>
</dbReference>
<dbReference type="PANTHER" id="PTHR33149">
    <property type="entry name" value="PHOTOSYSTEM II PROTEIN D1"/>
    <property type="match status" value="1"/>
</dbReference>
<dbReference type="Pfam" id="PF00124">
    <property type="entry name" value="Photo_RC"/>
    <property type="match status" value="1"/>
</dbReference>
<dbReference type="PRINTS" id="PR00256">
    <property type="entry name" value="REACTNCENTRE"/>
</dbReference>
<dbReference type="SUPFAM" id="SSF81483">
    <property type="entry name" value="Bacterial photosystem II reaction centre, L and M subunits"/>
    <property type="match status" value="1"/>
</dbReference>
<dbReference type="PROSITE" id="PS00244">
    <property type="entry name" value="REACTION_CENTER"/>
    <property type="match status" value="1"/>
</dbReference>
<sequence>MTIAIGKSSKEPKGLFDSMDDWLRRDRFVFVGWSGLLLFPCAYFALGGWLTGTTFVTSWYTHGLASSYLEGCNFLTAAVSTPANSLAHSLLLLWGPEAQGDFTRWCQLGGLWTFVAFHGAFGLIGFMLRQFEIARSVQLRPYNAIAFTGPIAVFVSVFLIYPLGQSGWFFAPSFGVAGIFRFILFFQGFHNWTLNPFHMMGVAGVLGAALLCAIHGATVENTIFEDGDGANTFRAFNPTQAEETYSFVTANRFWSQIFGVAFSNKRWLHFFMLFVPVTGLWMSAVGVVGLAVNLRAYDFVSQEIRAAEDPEFETFYTKNILLNEGIRAWMAAQDQPHENLVFPEEVLPRGNAL</sequence>
<geneLocation type="chloroplast"/>
<gene>
    <name evidence="2" type="primary">psbD</name>
</gene>
<comment type="function">
    <text evidence="2">Photosystem II (PSII) is a light-driven water:plastoquinone oxidoreductase that uses light energy to abstract electrons from H(2)O, generating O(2) and a proton gradient subsequently used for ATP formation. It consists of a core antenna complex that captures photons, and an electron transfer chain that converts photonic excitation into a charge separation. The D1/D2 (PsbA/PsbD) reaction center heterodimer binds P680, the primary electron donor of PSII as well as several subsequent electron acceptors. D2 is needed for assembly of a stable PSII complex.</text>
</comment>
<comment type="catalytic activity">
    <reaction evidence="2">
        <text>2 a plastoquinone + 4 hnu + 2 H2O = 2 a plastoquinol + O2</text>
        <dbReference type="Rhea" id="RHEA:36359"/>
        <dbReference type="Rhea" id="RHEA-COMP:9561"/>
        <dbReference type="Rhea" id="RHEA-COMP:9562"/>
        <dbReference type="ChEBI" id="CHEBI:15377"/>
        <dbReference type="ChEBI" id="CHEBI:15379"/>
        <dbReference type="ChEBI" id="CHEBI:17757"/>
        <dbReference type="ChEBI" id="CHEBI:30212"/>
        <dbReference type="ChEBI" id="CHEBI:62192"/>
        <dbReference type="EC" id="1.10.3.9"/>
    </reaction>
</comment>
<comment type="cofactor">
    <text evidence="2">The D1/D2 heterodimer binds P680, chlorophylls that are the primary electron donor of PSII, and subsequent electron acceptors. It shares a non-heme iron and each subunit binds pheophytin, quinone, additional chlorophylls, carotenoids and lipids. There is also a Cl(-1) ion associated with D1 and D2, which is required for oxygen evolution. The PSII complex binds additional chlorophylls, carotenoids and specific lipids.</text>
</comment>
<comment type="subunit">
    <text evidence="2">PSII is composed of 1 copy each of membrane proteins PsbA, PsbB, PsbC, PsbD, PsbE, PsbF, PsbH, PsbI, PsbJ, PsbK, PsbL, PsbM, PsbT, PsbX, PsbY, PsbZ, Psb30/Ycf12, at least 3 peripheral proteins of the oxygen-evolving complex and a large number of cofactors. It forms dimeric complexes.</text>
</comment>
<comment type="subcellular location">
    <subcellularLocation>
        <location evidence="2">Plastid</location>
        <location evidence="2">Chloroplast thylakoid membrane</location>
        <topology evidence="2">Multi-pass membrane protein</topology>
    </subcellularLocation>
</comment>
<comment type="miscellaneous">
    <text evidence="2">2 of the reaction center chlorophylls (ChlD1 and ChlD2) are entirely coordinated by water.</text>
</comment>
<comment type="similarity">
    <text evidence="2">Belongs to the reaction center PufL/M/PsbA/D family.</text>
</comment>
<name>PSBD_CHAGL</name>
<proteinExistence type="inferred from homology"/>
<keyword id="KW-0007">Acetylation</keyword>
<keyword id="KW-0148">Chlorophyll</keyword>
<keyword id="KW-0150">Chloroplast</keyword>
<keyword id="KW-0157">Chromophore</keyword>
<keyword id="KW-0249">Electron transport</keyword>
<keyword id="KW-0408">Iron</keyword>
<keyword id="KW-0460">Magnesium</keyword>
<keyword id="KW-0472">Membrane</keyword>
<keyword id="KW-0479">Metal-binding</keyword>
<keyword id="KW-0560">Oxidoreductase</keyword>
<keyword id="KW-0597">Phosphoprotein</keyword>
<keyword id="KW-0602">Photosynthesis</keyword>
<keyword id="KW-0604">Photosystem II</keyword>
<keyword id="KW-0934">Plastid</keyword>
<keyword id="KW-0793">Thylakoid</keyword>
<keyword id="KW-0812">Transmembrane</keyword>
<keyword id="KW-1133">Transmembrane helix</keyword>
<keyword id="KW-0813">Transport</keyword>
<reference key="1">
    <citation type="journal article" date="2002" name="Proc. Natl. Acad. Sci. U.S.A.">
        <title>The chloroplast and mitochondrial genome sequences of the charophyte Chaetosphaeridium globosum: insights into the timing of the events that restructured organelle DNAs within the green algal lineage that led to land plants.</title>
        <authorList>
            <person name="Turmel M."/>
            <person name="Otis C."/>
            <person name="Lemieux C."/>
        </authorList>
    </citation>
    <scope>NUCLEOTIDE SEQUENCE [LARGE SCALE GENOMIC DNA]</scope>
    <source>
        <strain>M1311</strain>
    </source>
</reference>
<evidence type="ECO:0000250" key="1">
    <source>
        <dbReference type="UniProtKB" id="P56761"/>
    </source>
</evidence>
<evidence type="ECO:0000255" key="2">
    <source>
        <dbReference type="HAMAP-Rule" id="MF_01383"/>
    </source>
</evidence>
<accession>Q8M9W4</accession>
<organism>
    <name type="scientific">Chaetosphaeridium globosum</name>
    <name type="common">Charophycean green alga</name>
    <name type="synonym">Herposteiron globosum</name>
    <dbReference type="NCBI Taxonomy" id="96477"/>
    <lineage>
        <taxon>Eukaryota</taxon>
        <taxon>Viridiplantae</taxon>
        <taxon>Streptophyta</taxon>
        <taxon>Coleochaetophyceae</taxon>
        <taxon>Coleochaetales</taxon>
        <taxon>Chaetosphaeridiaceae</taxon>
        <taxon>Chaetosphaeridium</taxon>
    </lineage>
</organism>
<feature type="initiator methionine" description="Removed" evidence="1">
    <location>
        <position position="1"/>
    </location>
</feature>
<feature type="chain" id="PRO_0000359631" description="Photosystem II D2 protein">
    <location>
        <begin position="2"/>
        <end position="353"/>
    </location>
</feature>
<feature type="transmembrane region" description="Helical" evidence="2">
    <location>
        <begin position="41"/>
        <end position="61"/>
    </location>
</feature>
<feature type="transmembrane region" description="Helical" evidence="2">
    <location>
        <begin position="125"/>
        <end position="141"/>
    </location>
</feature>
<feature type="transmembrane region" description="Helical" evidence="2">
    <location>
        <begin position="153"/>
        <end position="166"/>
    </location>
</feature>
<feature type="transmembrane region" description="Helical" evidence="2">
    <location>
        <begin position="208"/>
        <end position="228"/>
    </location>
</feature>
<feature type="transmembrane region" description="Helical" evidence="2">
    <location>
        <begin position="279"/>
        <end position="295"/>
    </location>
</feature>
<feature type="binding site" description="axial binding residue" evidence="2">
    <location>
        <position position="118"/>
    </location>
    <ligand>
        <name>chlorophyll a</name>
        <dbReference type="ChEBI" id="CHEBI:58416"/>
        <label>ChlzD2</label>
    </ligand>
    <ligandPart>
        <name>Mg</name>
        <dbReference type="ChEBI" id="CHEBI:25107"/>
    </ligandPart>
</feature>
<feature type="binding site" evidence="2">
    <location>
        <position position="130"/>
    </location>
    <ligand>
        <name>pheophytin a</name>
        <dbReference type="ChEBI" id="CHEBI:136840"/>
        <label>D2</label>
    </ligand>
</feature>
<feature type="binding site" evidence="2">
    <location>
        <position position="143"/>
    </location>
    <ligand>
        <name>pheophytin a</name>
        <dbReference type="ChEBI" id="CHEBI:136840"/>
        <label>D2</label>
    </ligand>
</feature>
<feature type="binding site" description="axial binding residue" evidence="2">
    <location>
        <position position="198"/>
    </location>
    <ligand>
        <name>chlorophyll a</name>
        <dbReference type="ChEBI" id="CHEBI:58416"/>
        <label>PD2</label>
    </ligand>
    <ligandPart>
        <name>Mg</name>
        <dbReference type="ChEBI" id="CHEBI:25107"/>
    </ligandPart>
</feature>
<feature type="binding site" evidence="2">
    <location>
        <position position="215"/>
    </location>
    <ligand>
        <name>a plastoquinone</name>
        <dbReference type="ChEBI" id="CHEBI:17757"/>
        <label>Q(A)</label>
    </ligand>
</feature>
<feature type="binding site" evidence="2">
    <location>
        <position position="215"/>
    </location>
    <ligand>
        <name>Fe cation</name>
        <dbReference type="ChEBI" id="CHEBI:24875"/>
        <note>ligand shared with heterodimeric partner</note>
    </ligand>
</feature>
<feature type="binding site" evidence="2">
    <location>
        <position position="262"/>
    </location>
    <ligand>
        <name>a plastoquinone</name>
        <dbReference type="ChEBI" id="CHEBI:17757"/>
        <label>Q(A)</label>
    </ligand>
</feature>
<feature type="binding site" evidence="2">
    <location>
        <position position="269"/>
    </location>
    <ligand>
        <name>Fe cation</name>
        <dbReference type="ChEBI" id="CHEBI:24875"/>
        <note>ligand shared with heterodimeric partner</note>
    </ligand>
</feature>
<feature type="modified residue" description="N-acetylthreonine" evidence="1">
    <location>
        <position position="2"/>
    </location>
</feature>
<feature type="modified residue" description="Phosphothreonine" evidence="1">
    <location>
        <position position="2"/>
    </location>
</feature>